<gene>
    <name type="primary">CHRC</name>
</gene>
<keyword id="KW-0957">Chromoplast</keyword>
<keyword id="KW-0903">Direct protein sequencing</keyword>
<keyword id="KW-0934">Plastid</keyword>
<keyword id="KW-0809">Transit peptide</keyword>
<sequence>MAFVSQFNQLPCKTLALNPPQPQLTSKPSVFPIASIGATARAAAGKSLISVRPAFKVRAVLNDDEWGEDKDEKYGDDSSVAVAEKEEEKPLEPSEIYKLKKALVDSFYGTDRGLRVSRDTRAEIVELITQLESKNPTPAPTEALTLLNGKWILAYTTFAGLFPLLSRNLPLVKVEEISQTIDSENLTVQNSVQFSGPLATTSITTNAKFEVRSPLRVHIKFEEGVIGTPQLTDSIVIPDNVDFLGQKIDFTPFNGIISSLQDTASNVAKTISSQPPIKFSISNTRVESWLLTTYLDEDLRISRGDGGSVFVLLKEGSSFLSL</sequence>
<reference key="1">
    <citation type="journal article" date="1996" name="Plant J.">
        <title>Molecular cloning of a carotenoid-associated protein from Cucumis sativus corollas: homologous genes involved in carotenoid sequestration in chromoplasts.</title>
        <authorList>
            <person name="Vishnevetsky M."/>
            <person name="Ovadis M."/>
            <person name="Itzhaki H."/>
            <person name="Levy M."/>
            <person name="Libal-Weksler Y."/>
            <person name="Adam Z."/>
            <person name="Vainstein A."/>
        </authorList>
    </citation>
    <scope>NUCLEOTIDE SEQUENCE [MRNA]</scope>
    <scope>PROTEIN SEQUENCE OF 59-82; 177-191 AND 224-233</scope>
    <scope>SUBCELLULAR LOCATION</scope>
    <scope>DEVELOPMENTAL STAGE</scope>
    <scope>TISSUE SPECIFICITY</scope>
    <source>
        <strain>cv. Shimshon</strain>
    </source>
</reference>
<reference key="2">
    <citation type="online journal article" date="1998" name="Plant Gene Register">
        <title>Isolation and sequence analysis of a gene from Cucumis sativus encoding the carotenoid-associated protein CHRC.</title>
        <authorList>
            <person name="Ovadis M."/>
            <person name="Vishnevetsky M."/>
            <person name="Vainstein A."/>
        </authorList>
        <locator>PGR98-217</locator>
    </citation>
    <scope>NUCLEOTIDE SEQUENCE [GENOMIC DNA]</scope>
</reference>
<reference key="3">
    <citation type="journal article" date="1997" name="J. Biol. Chem.">
        <title>CHRC, encoding a chromoplast-specific carotenoid-associated protein, is an early gibberellic acid-responsive gene.</title>
        <authorList>
            <person name="Vishnevetsky M."/>
            <person name="Ovadis M."/>
            <person name="Itzhaki H."/>
            <person name="Vainstein A."/>
        </authorList>
    </citation>
    <scope>FUNCTION</scope>
    <scope>INDUCTION</scope>
</reference>
<accession>Q96398</accession>
<comment type="function">
    <text evidence="3">May be involved in carotenoid sequestration within chromoplasts.</text>
</comment>
<comment type="subcellular location">
    <subcellularLocation>
        <location evidence="2">Plastid</location>
        <location evidence="2">Chromoplast</location>
    </subcellularLocation>
</comment>
<comment type="tissue specificity">
    <text evidence="2">Expressed in corollas. Not detected in fruits, stems, leaves, and roots.</text>
</comment>
<comment type="developmental stage">
    <text evidence="2">Expressed during flower development, just before anthesis. Undetectable 24 hours after anthesis.</text>
</comment>
<comment type="induction">
    <text evidence="3">Up-regulated by gibberellins within 20 minutes after treatment and down-regulated by abscisic acid and ethylene.</text>
</comment>
<comment type="similarity">
    <text evidence="4">Belongs to the PAP/fibrillin family.</text>
</comment>
<name>CHRC_CUCSA</name>
<feature type="transit peptide" description="Chromoplast" evidence="2">
    <location>
        <begin position="1"/>
        <end position="58"/>
    </location>
</feature>
<feature type="chain" id="PRO_0000023204" description="Chromoplast-specific carotenoid-associated protein, chromoplastic">
    <location>
        <begin position="59"/>
        <end position="322"/>
    </location>
</feature>
<feature type="region of interest" description="Disordered" evidence="1">
    <location>
        <begin position="67"/>
        <end position="88"/>
    </location>
</feature>
<dbReference type="EMBL" id="X95593">
    <property type="protein sequence ID" value="CAA64846.1"/>
    <property type="molecule type" value="mRNA"/>
</dbReference>
<dbReference type="EMBL" id="AF099501">
    <property type="protein sequence ID" value="AAD05165.1"/>
    <property type="molecule type" value="Genomic_DNA"/>
</dbReference>
<dbReference type="PIR" id="T10179">
    <property type="entry name" value="T10179"/>
</dbReference>
<dbReference type="RefSeq" id="NP_001392033.1">
    <property type="nucleotide sequence ID" value="NM_001405104.1"/>
</dbReference>
<dbReference type="RefSeq" id="XP_004134784.1">
    <property type="nucleotide sequence ID" value="XM_004134736.2"/>
</dbReference>
<dbReference type="EnsemblPlants" id="KGN49072">
    <property type="protein sequence ID" value="KGN49072"/>
    <property type="gene ID" value="Csa_6G512870"/>
</dbReference>
<dbReference type="GeneID" id="101203857"/>
<dbReference type="Gramene" id="KGN49072">
    <property type="protein sequence ID" value="KGN49072"/>
    <property type="gene ID" value="Csa_6G512870"/>
</dbReference>
<dbReference type="KEGG" id="csv:101203857"/>
<dbReference type="eggNOG" id="ENOG502QS2T">
    <property type="taxonomic scope" value="Eukaryota"/>
</dbReference>
<dbReference type="OMA" id="QATNYDK"/>
<dbReference type="OrthoDB" id="498392at2759"/>
<dbReference type="GO" id="GO:0009509">
    <property type="term" value="C:chromoplast"/>
    <property type="evidence" value="ECO:0007669"/>
    <property type="project" value="UniProtKB-SubCell"/>
</dbReference>
<dbReference type="InterPro" id="IPR039633">
    <property type="entry name" value="PAP"/>
</dbReference>
<dbReference type="InterPro" id="IPR006843">
    <property type="entry name" value="PAP/fibrillin_dom"/>
</dbReference>
<dbReference type="PANTHER" id="PTHR31906">
    <property type="entry name" value="PLASTID-LIPID-ASSOCIATED PROTEIN 4, CHLOROPLASTIC-RELATED"/>
    <property type="match status" value="1"/>
</dbReference>
<dbReference type="Pfam" id="PF04755">
    <property type="entry name" value="PAP_fibrillin"/>
    <property type="match status" value="1"/>
</dbReference>
<proteinExistence type="evidence at protein level"/>
<organism>
    <name type="scientific">Cucumis sativus</name>
    <name type="common">Cucumber</name>
    <dbReference type="NCBI Taxonomy" id="3659"/>
    <lineage>
        <taxon>Eukaryota</taxon>
        <taxon>Viridiplantae</taxon>
        <taxon>Streptophyta</taxon>
        <taxon>Embryophyta</taxon>
        <taxon>Tracheophyta</taxon>
        <taxon>Spermatophyta</taxon>
        <taxon>Magnoliopsida</taxon>
        <taxon>eudicotyledons</taxon>
        <taxon>Gunneridae</taxon>
        <taxon>Pentapetalae</taxon>
        <taxon>rosids</taxon>
        <taxon>fabids</taxon>
        <taxon>Cucurbitales</taxon>
        <taxon>Cucurbitaceae</taxon>
        <taxon>Benincaseae</taxon>
        <taxon>Cucumis</taxon>
    </lineage>
</organism>
<evidence type="ECO:0000256" key="1">
    <source>
        <dbReference type="SAM" id="MobiDB-lite"/>
    </source>
</evidence>
<evidence type="ECO:0000269" key="2">
    <source>
    </source>
</evidence>
<evidence type="ECO:0000269" key="3">
    <source>
    </source>
</evidence>
<evidence type="ECO:0000305" key="4"/>
<protein>
    <recommendedName>
        <fullName>Chromoplast-specific carotenoid-associated protein, chromoplastic</fullName>
    </recommendedName>
</protein>